<accession>B8FA63</accession>
<sequence length="416" mass="45729">MSKKGDSSDHLRCSFCGKNQDEVKKLIAGPAVYICDECIELCNEIIAEETEKGAVDSEFQDIPSPKEIKAMLDEYVIEQDHAKKVLSVAVYNHYKRLDTAFDSKDVDIQKSNVLLIGPTGSGKTLLAQTLARFLDVPFTIADATALTEAGYVGEDVENIILSLLQNADYDVERAKRGIVYIDEIDKIARKSDNPSITRDVSGEGVQQALLKIVEGTTASVPPKGGRKHPQQDFVKVDTSNILFICGGAFNGLAELIQRRQGEKVMGFGAKVQTKTDMKIGDLLVQTRPEDLLKFGLIPEFVGRLPVIATLGELGEESLVRILTEPKNALVKQFQKLFEMEGVKLRFTDSALSAIAKGALDRKSGARGLRAIVEKAMLDIQYEIPSMENVKECVIGEEVVMHGEDPILLFEPSKKKA</sequence>
<name>CLPX_DESAL</name>
<keyword id="KW-0067">ATP-binding</keyword>
<keyword id="KW-0143">Chaperone</keyword>
<keyword id="KW-0479">Metal-binding</keyword>
<keyword id="KW-0547">Nucleotide-binding</keyword>
<keyword id="KW-1185">Reference proteome</keyword>
<keyword id="KW-0862">Zinc</keyword>
<protein>
    <recommendedName>
        <fullName evidence="1">ATP-dependent Clp protease ATP-binding subunit ClpX</fullName>
    </recommendedName>
</protein>
<dbReference type="EMBL" id="CP001322">
    <property type="protein sequence ID" value="ACL03159.1"/>
    <property type="molecule type" value="Genomic_DNA"/>
</dbReference>
<dbReference type="RefSeq" id="WP_012610594.1">
    <property type="nucleotide sequence ID" value="NC_011768.1"/>
</dbReference>
<dbReference type="SMR" id="B8FA63"/>
<dbReference type="KEGG" id="dal:Dalk_1459"/>
<dbReference type="eggNOG" id="COG1219">
    <property type="taxonomic scope" value="Bacteria"/>
</dbReference>
<dbReference type="HOGENOM" id="CLU_014218_8_2_7"/>
<dbReference type="Proteomes" id="UP000000739">
    <property type="component" value="Chromosome"/>
</dbReference>
<dbReference type="GO" id="GO:0009376">
    <property type="term" value="C:HslUV protease complex"/>
    <property type="evidence" value="ECO:0007669"/>
    <property type="project" value="TreeGrafter"/>
</dbReference>
<dbReference type="GO" id="GO:0005524">
    <property type="term" value="F:ATP binding"/>
    <property type="evidence" value="ECO:0007669"/>
    <property type="project" value="UniProtKB-UniRule"/>
</dbReference>
<dbReference type="GO" id="GO:0016887">
    <property type="term" value="F:ATP hydrolysis activity"/>
    <property type="evidence" value="ECO:0007669"/>
    <property type="project" value="InterPro"/>
</dbReference>
<dbReference type="GO" id="GO:0140662">
    <property type="term" value="F:ATP-dependent protein folding chaperone"/>
    <property type="evidence" value="ECO:0007669"/>
    <property type="project" value="InterPro"/>
</dbReference>
<dbReference type="GO" id="GO:0046983">
    <property type="term" value="F:protein dimerization activity"/>
    <property type="evidence" value="ECO:0007669"/>
    <property type="project" value="InterPro"/>
</dbReference>
<dbReference type="GO" id="GO:0051082">
    <property type="term" value="F:unfolded protein binding"/>
    <property type="evidence" value="ECO:0007669"/>
    <property type="project" value="UniProtKB-UniRule"/>
</dbReference>
<dbReference type="GO" id="GO:0008270">
    <property type="term" value="F:zinc ion binding"/>
    <property type="evidence" value="ECO:0007669"/>
    <property type="project" value="InterPro"/>
</dbReference>
<dbReference type="GO" id="GO:0051301">
    <property type="term" value="P:cell division"/>
    <property type="evidence" value="ECO:0007669"/>
    <property type="project" value="TreeGrafter"/>
</dbReference>
<dbReference type="GO" id="GO:0051603">
    <property type="term" value="P:proteolysis involved in protein catabolic process"/>
    <property type="evidence" value="ECO:0007669"/>
    <property type="project" value="TreeGrafter"/>
</dbReference>
<dbReference type="CDD" id="cd19497">
    <property type="entry name" value="RecA-like_ClpX"/>
    <property type="match status" value="1"/>
</dbReference>
<dbReference type="FunFam" id="1.10.8.60:FF:000002">
    <property type="entry name" value="ATP-dependent Clp protease ATP-binding subunit ClpX"/>
    <property type="match status" value="1"/>
</dbReference>
<dbReference type="FunFam" id="3.40.50.300:FF:000005">
    <property type="entry name" value="ATP-dependent Clp protease ATP-binding subunit ClpX"/>
    <property type="match status" value="1"/>
</dbReference>
<dbReference type="Gene3D" id="1.10.8.60">
    <property type="match status" value="1"/>
</dbReference>
<dbReference type="Gene3D" id="6.20.220.10">
    <property type="entry name" value="ClpX chaperone, C4-type zinc finger domain"/>
    <property type="match status" value="1"/>
</dbReference>
<dbReference type="Gene3D" id="3.40.50.300">
    <property type="entry name" value="P-loop containing nucleotide triphosphate hydrolases"/>
    <property type="match status" value="1"/>
</dbReference>
<dbReference type="HAMAP" id="MF_00175">
    <property type="entry name" value="ClpX"/>
    <property type="match status" value="1"/>
</dbReference>
<dbReference type="InterPro" id="IPR003593">
    <property type="entry name" value="AAA+_ATPase"/>
</dbReference>
<dbReference type="InterPro" id="IPR050052">
    <property type="entry name" value="ATP-dep_Clp_protease_ClpX"/>
</dbReference>
<dbReference type="InterPro" id="IPR003959">
    <property type="entry name" value="ATPase_AAA_core"/>
</dbReference>
<dbReference type="InterPro" id="IPR019489">
    <property type="entry name" value="Clp_ATPase_C"/>
</dbReference>
<dbReference type="InterPro" id="IPR004487">
    <property type="entry name" value="Clp_protease_ATP-bd_su_ClpX"/>
</dbReference>
<dbReference type="InterPro" id="IPR046425">
    <property type="entry name" value="ClpX_bact"/>
</dbReference>
<dbReference type="InterPro" id="IPR027417">
    <property type="entry name" value="P-loop_NTPase"/>
</dbReference>
<dbReference type="InterPro" id="IPR010603">
    <property type="entry name" value="Znf_CppX_C4"/>
</dbReference>
<dbReference type="InterPro" id="IPR038366">
    <property type="entry name" value="Znf_CppX_C4_sf"/>
</dbReference>
<dbReference type="NCBIfam" id="TIGR00382">
    <property type="entry name" value="clpX"/>
    <property type="match status" value="1"/>
</dbReference>
<dbReference type="NCBIfam" id="NF003745">
    <property type="entry name" value="PRK05342.1"/>
    <property type="match status" value="1"/>
</dbReference>
<dbReference type="PANTHER" id="PTHR48102:SF7">
    <property type="entry name" value="ATP-DEPENDENT CLP PROTEASE ATP-BINDING SUBUNIT CLPX-LIKE, MITOCHONDRIAL"/>
    <property type="match status" value="1"/>
</dbReference>
<dbReference type="PANTHER" id="PTHR48102">
    <property type="entry name" value="ATP-DEPENDENT CLP PROTEASE ATP-BINDING SUBUNIT CLPX-LIKE, MITOCHONDRIAL-RELATED"/>
    <property type="match status" value="1"/>
</dbReference>
<dbReference type="Pfam" id="PF07724">
    <property type="entry name" value="AAA_2"/>
    <property type="match status" value="1"/>
</dbReference>
<dbReference type="Pfam" id="PF10431">
    <property type="entry name" value="ClpB_D2-small"/>
    <property type="match status" value="1"/>
</dbReference>
<dbReference type="Pfam" id="PF06689">
    <property type="entry name" value="zf-C4_ClpX"/>
    <property type="match status" value="1"/>
</dbReference>
<dbReference type="SMART" id="SM00382">
    <property type="entry name" value="AAA"/>
    <property type="match status" value="1"/>
</dbReference>
<dbReference type="SMART" id="SM01086">
    <property type="entry name" value="ClpB_D2-small"/>
    <property type="match status" value="1"/>
</dbReference>
<dbReference type="SMART" id="SM00994">
    <property type="entry name" value="zf-C4_ClpX"/>
    <property type="match status" value="1"/>
</dbReference>
<dbReference type="SUPFAM" id="SSF57716">
    <property type="entry name" value="Glucocorticoid receptor-like (DNA-binding domain)"/>
    <property type="match status" value="1"/>
</dbReference>
<dbReference type="SUPFAM" id="SSF52540">
    <property type="entry name" value="P-loop containing nucleoside triphosphate hydrolases"/>
    <property type="match status" value="1"/>
</dbReference>
<dbReference type="PROSITE" id="PS51902">
    <property type="entry name" value="CLPX_ZB"/>
    <property type="match status" value="1"/>
</dbReference>
<gene>
    <name evidence="1" type="primary">clpX</name>
    <name type="ordered locus">Dalk_1459</name>
</gene>
<reference key="1">
    <citation type="journal article" date="2012" name="Environ. Microbiol.">
        <title>The genome sequence of Desulfatibacillum alkenivorans AK-01: a blueprint for anaerobic alkane oxidation.</title>
        <authorList>
            <person name="Callaghan A.V."/>
            <person name="Morris B.E."/>
            <person name="Pereira I.A."/>
            <person name="McInerney M.J."/>
            <person name="Austin R.N."/>
            <person name="Groves J.T."/>
            <person name="Kukor J.J."/>
            <person name="Suflita J.M."/>
            <person name="Young L.Y."/>
            <person name="Zylstra G.J."/>
            <person name="Wawrik B."/>
        </authorList>
    </citation>
    <scope>NUCLEOTIDE SEQUENCE [LARGE SCALE GENOMIC DNA]</scope>
    <source>
        <strain>AK-01</strain>
    </source>
</reference>
<evidence type="ECO:0000255" key="1">
    <source>
        <dbReference type="HAMAP-Rule" id="MF_00175"/>
    </source>
</evidence>
<evidence type="ECO:0000255" key="2">
    <source>
        <dbReference type="PROSITE-ProRule" id="PRU01250"/>
    </source>
</evidence>
<comment type="function">
    <text evidence="1">ATP-dependent specificity component of the Clp protease. It directs the protease to specific substrates. Can perform chaperone functions in the absence of ClpP.</text>
</comment>
<comment type="subunit">
    <text evidence="1">Component of the ClpX-ClpP complex. Forms a hexameric ring that, in the presence of ATP, binds to fourteen ClpP subunits assembled into a disk-like structure with a central cavity, resembling the structure of eukaryotic proteasomes.</text>
</comment>
<comment type="similarity">
    <text evidence="1">Belongs to the ClpX chaperone family.</text>
</comment>
<proteinExistence type="inferred from homology"/>
<feature type="chain" id="PRO_1000189686" description="ATP-dependent Clp protease ATP-binding subunit ClpX">
    <location>
        <begin position="1"/>
        <end position="416"/>
    </location>
</feature>
<feature type="domain" description="ClpX-type ZB" evidence="2">
    <location>
        <begin position="1"/>
        <end position="54"/>
    </location>
</feature>
<feature type="binding site" evidence="2">
    <location>
        <position position="13"/>
    </location>
    <ligand>
        <name>Zn(2+)</name>
        <dbReference type="ChEBI" id="CHEBI:29105"/>
    </ligand>
</feature>
<feature type="binding site" evidence="2">
    <location>
        <position position="16"/>
    </location>
    <ligand>
        <name>Zn(2+)</name>
        <dbReference type="ChEBI" id="CHEBI:29105"/>
    </ligand>
</feature>
<feature type="binding site" evidence="2">
    <location>
        <position position="35"/>
    </location>
    <ligand>
        <name>Zn(2+)</name>
        <dbReference type="ChEBI" id="CHEBI:29105"/>
    </ligand>
</feature>
<feature type="binding site" evidence="2">
    <location>
        <position position="38"/>
    </location>
    <ligand>
        <name>Zn(2+)</name>
        <dbReference type="ChEBI" id="CHEBI:29105"/>
    </ligand>
</feature>
<feature type="binding site" evidence="1">
    <location>
        <begin position="118"/>
        <end position="125"/>
    </location>
    <ligand>
        <name>ATP</name>
        <dbReference type="ChEBI" id="CHEBI:30616"/>
    </ligand>
</feature>
<organism>
    <name type="scientific">Desulfatibacillum aliphaticivorans</name>
    <dbReference type="NCBI Taxonomy" id="218208"/>
    <lineage>
        <taxon>Bacteria</taxon>
        <taxon>Pseudomonadati</taxon>
        <taxon>Thermodesulfobacteriota</taxon>
        <taxon>Desulfobacteria</taxon>
        <taxon>Desulfobacterales</taxon>
        <taxon>Desulfatibacillaceae</taxon>
        <taxon>Desulfatibacillum</taxon>
    </lineage>
</organism>